<proteinExistence type="inferred from homology"/>
<organism>
    <name type="scientific">Burkholderia pseudomallei (strain 1710b)</name>
    <dbReference type="NCBI Taxonomy" id="320372"/>
    <lineage>
        <taxon>Bacteria</taxon>
        <taxon>Pseudomonadati</taxon>
        <taxon>Pseudomonadota</taxon>
        <taxon>Betaproteobacteria</taxon>
        <taxon>Burkholderiales</taxon>
        <taxon>Burkholderiaceae</taxon>
        <taxon>Burkholderia</taxon>
        <taxon>pseudomallei group</taxon>
    </lineage>
</organism>
<protein>
    <recommendedName>
        <fullName evidence="1">Small ribosomal subunit protein uS3</fullName>
    </recommendedName>
    <alternativeName>
        <fullName evidence="3">30S ribosomal protein S3</fullName>
    </alternativeName>
</protein>
<accession>Q3JMR9</accession>
<evidence type="ECO:0000255" key="1">
    <source>
        <dbReference type="HAMAP-Rule" id="MF_01309"/>
    </source>
</evidence>
<evidence type="ECO:0000256" key="2">
    <source>
        <dbReference type="SAM" id="MobiDB-lite"/>
    </source>
</evidence>
<evidence type="ECO:0000305" key="3"/>
<dbReference type="EMBL" id="CP000124">
    <property type="protein sequence ID" value="ABA49998.1"/>
    <property type="molecule type" value="Genomic_DNA"/>
</dbReference>
<dbReference type="RefSeq" id="WP_004185240.1">
    <property type="nucleotide sequence ID" value="NC_007434.1"/>
</dbReference>
<dbReference type="SMR" id="Q3JMR9"/>
<dbReference type="EnsemblBacteria" id="ABA49998">
    <property type="protein sequence ID" value="ABA49998"/>
    <property type="gene ID" value="BURPS1710b_3770"/>
</dbReference>
<dbReference type="GeneID" id="93061826"/>
<dbReference type="KEGG" id="bpm:BURPS1710b_3770"/>
<dbReference type="HOGENOM" id="CLU_058591_0_2_4"/>
<dbReference type="Proteomes" id="UP000002700">
    <property type="component" value="Chromosome I"/>
</dbReference>
<dbReference type="GO" id="GO:0022627">
    <property type="term" value="C:cytosolic small ribosomal subunit"/>
    <property type="evidence" value="ECO:0007669"/>
    <property type="project" value="TreeGrafter"/>
</dbReference>
<dbReference type="GO" id="GO:0003729">
    <property type="term" value="F:mRNA binding"/>
    <property type="evidence" value="ECO:0007669"/>
    <property type="project" value="UniProtKB-UniRule"/>
</dbReference>
<dbReference type="GO" id="GO:0019843">
    <property type="term" value="F:rRNA binding"/>
    <property type="evidence" value="ECO:0007669"/>
    <property type="project" value="UniProtKB-UniRule"/>
</dbReference>
<dbReference type="GO" id="GO:0003735">
    <property type="term" value="F:structural constituent of ribosome"/>
    <property type="evidence" value="ECO:0007669"/>
    <property type="project" value="InterPro"/>
</dbReference>
<dbReference type="GO" id="GO:0006412">
    <property type="term" value="P:translation"/>
    <property type="evidence" value="ECO:0007669"/>
    <property type="project" value="UniProtKB-UniRule"/>
</dbReference>
<dbReference type="CDD" id="cd02412">
    <property type="entry name" value="KH-II_30S_S3"/>
    <property type="match status" value="1"/>
</dbReference>
<dbReference type="FunFam" id="3.30.1140.32:FF:000006">
    <property type="entry name" value="30S ribosomal protein S3"/>
    <property type="match status" value="1"/>
</dbReference>
<dbReference type="FunFam" id="3.30.300.20:FF:000001">
    <property type="entry name" value="30S ribosomal protein S3"/>
    <property type="match status" value="1"/>
</dbReference>
<dbReference type="Gene3D" id="3.30.300.20">
    <property type="match status" value="1"/>
</dbReference>
<dbReference type="Gene3D" id="3.30.1140.32">
    <property type="entry name" value="Ribosomal protein S3, C-terminal domain"/>
    <property type="match status" value="1"/>
</dbReference>
<dbReference type="HAMAP" id="MF_01309_B">
    <property type="entry name" value="Ribosomal_uS3_B"/>
    <property type="match status" value="1"/>
</dbReference>
<dbReference type="InterPro" id="IPR004087">
    <property type="entry name" value="KH_dom"/>
</dbReference>
<dbReference type="InterPro" id="IPR015946">
    <property type="entry name" value="KH_dom-like_a/b"/>
</dbReference>
<dbReference type="InterPro" id="IPR004044">
    <property type="entry name" value="KH_dom_type_2"/>
</dbReference>
<dbReference type="InterPro" id="IPR009019">
    <property type="entry name" value="KH_sf_prok-type"/>
</dbReference>
<dbReference type="InterPro" id="IPR036419">
    <property type="entry name" value="Ribosomal_S3_C_sf"/>
</dbReference>
<dbReference type="InterPro" id="IPR005704">
    <property type="entry name" value="Ribosomal_uS3_bac-typ"/>
</dbReference>
<dbReference type="InterPro" id="IPR001351">
    <property type="entry name" value="Ribosomal_uS3_C"/>
</dbReference>
<dbReference type="InterPro" id="IPR018280">
    <property type="entry name" value="Ribosomal_uS3_CS"/>
</dbReference>
<dbReference type="NCBIfam" id="TIGR01009">
    <property type="entry name" value="rpsC_bact"/>
    <property type="match status" value="1"/>
</dbReference>
<dbReference type="PANTHER" id="PTHR11760">
    <property type="entry name" value="30S/40S RIBOSOMAL PROTEIN S3"/>
    <property type="match status" value="1"/>
</dbReference>
<dbReference type="PANTHER" id="PTHR11760:SF19">
    <property type="entry name" value="SMALL RIBOSOMAL SUBUNIT PROTEIN US3C"/>
    <property type="match status" value="1"/>
</dbReference>
<dbReference type="Pfam" id="PF07650">
    <property type="entry name" value="KH_2"/>
    <property type="match status" value="1"/>
</dbReference>
<dbReference type="Pfam" id="PF00189">
    <property type="entry name" value="Ribosomal_S3_C"/>
    <property type="match status" value="1"/>
</dbReference>
<dbReference type="SMART" id="SM00322">
    <property type="entry name" value="KH"/>
    <property type="match status" value="1"/>
</dbReference>
<dbReference type="SUPFAM" id="SSF54814">
    <property type="entry name" value="Prokaryotic type KH domain (KH-domain type II)"/>
    <property type="match status" value="1"/>
</dbReference>
<dbReference type="SUPFAM" id="SSF54821">
    <property type="entry name" value="Ribosomal protein S3 C-terminal domain"/>
    <property type="match status" value="1"/>
</dbReference>
<dbReference type="PROSITE" id="PS50823">
    <property type="entry name" value="KH_TYPE_2"/>
    <property type="match status" value="1"/>
</dbReference>
<dbReference type="PROSITE" id="PS00548">
    <property type="entry name" value="RIBOSOMAL_S3"/>
    <property type="match status" value="1"/>
</dbReference>
<keyword id="KW-0687">Ribonucleoprotein</keyword>
<keyword id="KW-0689">Ribosomal protein</keyword>
<keyword id="KW-0694">RNA-binding</keyword>
<keyword id="KW-0699">rRNA-binding</keyword>
<reference key="1">
    <citation type="journal article" date="2010" name="Genome Biol. Evol.">
        <title>Continuing evolution of Burkholderia mallei through genome reduction and large-scale rearrangements.</title>
        <authorList>
            <person name="Losada L."/>
            <person name="Ronning C.M."/>
            <person name="DeShazer D."/>
            <person name="Woods D."/>
            <person name="Fedorova N."/>
            <person name="Kim H.S."/>
            <person name="Shabalina S.A."/>
            <person name="Pearson T.R."/>
            <person name="Brinkac L."/>
            <person name="Tan P."/>
            <person name="Nandi T."/>
            <person name="Crabtree J."/>
            <person name="Badger J."/>
            <person name="Beckstrom-Sternberg S."/>
            <person name="Saqib M."/>
            <person name="Schutzer S.E."/>
            <person name="Keim P."/>
            <person name="Nierman W.C."/>
        </authorList>
    </citation>
    <scope>NUCLEOTIDE SEQUENCE [LARGE SCALE GENOMIC DNA]</scope>
    <source>
        <strain>1710b</strain>
    </source>
</reference>
<gene>
    <name evidence="1" type="primary">rpsC</name>
    <name type="ordered locus">BURPS1710b_3770</name>
</gene>
<name>RS3_BURP1</name>
<feature type="chain" id="PRO_0000230684" description="Small ribosomal subunit protein uS3">
    <location>
        <begin position="1"/>
        <end position="266"/>
    </location>
</feature>
<feature type="domain" description="KH type-2" evidence="1">
    <location>
        <begin position="39"/>
        <end position="107"/>
    </location>
</feature>
<feature type="region of interest" description="Disordered" evidence="2">
    <location>
        <begin position="214"/>
        <end position="266"/>
    </location>
</feature>
<feature type="compositionally biased region" description="Basic and acidic residues" evidence="2">
    <location>
        <begin position="230"/>
        <end position="241"/>
    </location>
</feature>
<feature type="compositionally biased region" description="Basic and acidic residues" evidence="2">
    <location>
        <begin position="257"/>
        <end position="266"/>
    </location>
</feature>
<sequence>MGQKIHPTGFRLAVSRNWASRWYANNNNFAAMLQEDIGVREYLKKKLKNASVGRVVIERPAKNARITIFSSRPGVVIGKKGEDIELLKTELQRRMGVPVHVNIEEIRKPETDAQLIADSITQQLERRIMFRRAMKRAMQNAMRLGAQGIKIMSAGRLNGIEIARTEWYREGRVPLHTLRADIDYATSEAKTTYGIIGVKVWVYKGDTLGRNDAPVVEEVTEDKRPRRNARPGDRRPRRDGEGGAPGARRGGPRRGAGKPEDGKTGE</sequence>
<comment type="function">
    <text evidence="1">Binds the lower part of the 30S subunit head. Binds mRNA in the 70S ribosome, positioning it for translation.</text>
</comment>
<comment type="subunit">
    <text evidence="1">Part of the 30S ribosomal subunit. Forms a tight complex with proteins S10 and S14.</text>
</comment>
<comment type="similarity">
    <text evidence="1">Belongs to the universal ribosomal protein uS3 family.</text>
</comment>